<evidence type="ECO:0000250" key="1"/>
<evidence type="ECO:0000250" key="2">
    <source>
        <dbReference type="UniProtKB" id="P15289"/>
    </source>
</evidence>
<evidence type="ECO:0000250" key="3">
    <source>
        <dbReference type="UniProtKB" id="P15848"/>
    </source>
</evidence>
<evidence type="ECO:0000250" key="4">
    <source>
        <dbReference type="UniProtKB" id="P50430"/>
    </source>
</evidence>
<evidence type="ECO:0000255" key="5"/>
<evidence type="ECO:0000269" key="6">
    <source>
    </source>
</evidence>
<evidence type="ECO:0000303" key="7">
    <source>
    </source>
</evidence>
<evidence type="ECO:0000305" key="8"/>
<dbReference type="EC" id="3.1.6.12"/>
<dbReference type="EMBL" id="AK083309">
    <property type="protein sequence ID" value="BAC38859.1"/>
    <property type="molecule type" value="mRNA"/>
</dbReference>
<dbReference type="EMBL" id="AK154098">
    <property type="protein sequence ID" value="BAE32375.1"/>
    <property type="molecule type" value="mRNA"/>
</dbReference>
<dbReference type="EMBL" id="AK158312">
    <property type="protein sequence ID" value="BAE34455.1"/>
    <property type="molecule type" value="mRNA"/>
</dbReference>
<dbReference type="EMBL" id="AC131739">
    <property type="status" value="NOT_ANNOTATED_CDS"/>
    <property type="molecule type" value="Genomic_DNA"/>
</dbReference>
<dbReference type="EMBL" id="AC136976">
    <property type="status" value="NOT_ANNOTATED_CDS"/>
    <property type="molecule type" value="Genomic_DNA"/>
</dbReference>
<dbReference type="EMBL" id="M82877">
    <property type="protein sequence ID" value="AAA37261.1"/>
    <property type="molecule type" value="mRNA"/>
</dbReference>
<dbReference type="EMBL" id="X92096">
    <property type="protein sequence ID" value="CAA63067.1"/>
    <property type="molecule type" value="mRNA"/>
</dbReference>
<dbReference type="EMBL" id="BN000746">
    <property type="protein sequence ID" value="CAI84992.1"/>
    <property type="molecule type" value="mRNA"/>
</dbReference>
<dbReference type="CCDS" id="CCDS36749.1">
    <molecule id="P50429-1"/>
</dbReference>
<dbReference type="RefSeq" id="NP_033842.3">
    <property type="nucleotide sequence ID" value="NM_009712.3"/>
</dbReference>
<dbReference type="SMR" id="P50429"/>
<dbReference type="BioGRID" id="198216">
    <property type="interactions" value="10"/>
</dbReference>
<dbReference type="FunCoup" id="P50429">
    <property type="interactions" value="327"/>
</dbReference>
<dbReference type="STRING" id="10090.ENSMUSP00000088964"/>
<dbReference type="GlyConnect" id="2134">
    <property type="glycosylation" value="4 N-Linked glycans (2 sites)"/>
</dbReference>
<dbReference type="GlyCosmos" id="P50429">
    <property type="glycosylation" value="6 sites, 4 glycans"/>
</dbReference>
<dbReference type="GlyGen" id="P50429">
    <property type="glycosylation" value="8 sites, 9 N-linked glycans (5 sites), 1 O-linked glycan (1 site)"/>
</dbReference>
<dbReference type="iPTMnet" id="P50429"/>
<dbReference type="PhosphoSitePlus" id="P50429"/>
<dbReference type="SwissPalm" id="P50429"/>
<dbReference type="jPOST" id="P50429"/>
<dbReference type="PaxDb" id="10090-ENSMUSP00000088964"/>
<dbReference type="PeptideAtlas" id="P50429"/>
<dbReference type="ProteomicsDB" id="281906">
    <molecule id="P50429-1"/>
</dbReference>
<dbReference type="ProteomicsDB" id="281907">
    <molecule id="P50429-2"/>
</dbReference>
<dbReference type="Pumba" id="P50429"/>
<dbReference type="DNASU" id="11881"/>
<dbReference type="GeneID" id="11881"/>
<dbReference type="KEGG" id="mmu:11881"/>
<dbReference type="UCSC" id="uc007rlo.1">
    <molecule id="P50429-1"/>
    <property type="organism name" value="mouse"/>
</dbReference>
<dbReference type="UCSC" id="uc011zcv.1">
    <molecule id="P50429-2"/>
    <property type="organism name" value="mouse"/>
</dbReference>
<dbReference type="AGR" id="MGI:88075"/>
<dbReference type="CTD" id="411"/>
<dbReference type="MGI" id="MGI:88075">
    <property type="gene designation" value="Arsb"/>
</dbReference>
<dbReference type="eggNOG" id="KOG3867">
    <property type="taxonomic scope" value="Eukaryota"/>
</dbReference>
<dbReference type="InParanoid" id="P50429"/>
<dbReference type="OrthoDB" id="103349at2759"/>
<dbReference type="PhylomeDB" id="P50429"/>
<dbReference type="TreeFam" id="TF314186"/>
<dbReference type="BRENDA" id="3.1.6.12">
    <property type="organism ID" value="3474"/>
</dbReference>
<dbReference type="Reactome" id="R-MMU-1663150">
    <property type="pathway name" value="The activation of arylsulfatases"/>
</dbReference>
<dbReference type="Reactome" id="R-MMU-2024101">
    <property type="pathway name" value="CS/DS degradation"/>
</dbReference>
<dbReference type="Reactome" id="R-MMU-6798695">
    <property type="pathway name" value="Neutrophil degranulation"/>
</dbReference>
<dbReference type="Reactome" id="R-MMU-9840310">
    <property type="pathway name" value="Glycosphingolipid catabolism"/>
</dbReference>
<dbReference type="SABIO-RK" id="P50429"/>
<dbReference type="BioGRID-ORCS" id="11881">
    <property type="hits" value="1 hit in 80 CRISPR screens"/>
</dbReference>
<dbReference type="ChiTaRS" id="Arsb">
    <property type="organism name" value="mouse"/>
</dbReference>
<dbReference type="PRO" id="PR:P50429"/>
<dbReference type="Proteomes" id="UP000000589">
    <property type="component" value="Unplaced"/>
</dbReference>
<dbReference type="RNAct" id="P50429">
    <property type="molecule type" value="protein"/>
</dbReference>
<dbReference type="GO" id="GO:0009986">
    <property type="term" value="C:cell surface"/>
    <property type="evidence" value="ECO:0000314"/>
    <property type="project" value="UniProtKB"/>
</dbReference>
<dbReference type="GO" id="GO:0005764">
    <property type="term" value="C:lysosome"/>
    <property type="evidence" value="ECO:0000314"/>
    <property type="project" value="MGI"/>
</dbReference>
<dbReference type="GO" id="GO:0004065">
    <property type="term" value="F:arylsulfatase activity"/>
    <property type="evidence" value="ECO:0000314"/>
    <property type="project" value="MGI"/>
</dbReference>
<dbReference type="GO" id="GO:0046872">
    <property type="term" value="F:metal ion binding"/>
    <property type="evidence" value="ECO:0007669"/>
    <property type="project" value="UniProtKB-KW"/>
</dbReference>
<dbReference type="GO" id="GO:0003943">
    <property type="term" value="F:N-acetylgalactosamine-4-sulfatase activity"/>
    <property type="evidence" value="ECO:0000250"/>
    <property type="project" value="UniProtKB"/>
</dbReference>
<dbReference type="GO" id="GO:0043890">
    <property type="term" value="F:N-acetylgalactosamine-6-sulfatase activity"/>
    <property type="evidence" value="ECO:0000315"/>
    <property type="project" value="MGI"/>
</dbReference>
<dbReference type="GO" id="GO:0097065">
    <property type="term" value="P:anterior head development"/>
    <property type="evidence" value="ECO:0000315"/>
    <property type="project" value="MGI"/>
</dbReference>
<dbReference type="GO" id="GO:0030207">
    <property type="term" value="P:chondroitin sulfate proteoglycan catabolic process"/>
    <property type="evidence" value="ECO:0000266"/>
    <property type="project" value="MGI"/>
</dbReference>
<dbReference type="GO" id="GO:0061580">
    <property type="term" value="P:colon epithelial cell migration"/>
    <property type="evidence" value="ECO:0000250"/>
    <property type="project" value="UniProtKB"/>
</dbReference>
<dbReference type="GO" id="GO:0030209">
    <property type="term" value="P:dermatan sulfate proteoglycan catabolic process"/>
    <property type="evidence" value="ECO:0000315"/>
    <property type="project" value="MGI"/>
</dbReference>
<dbReference type="GO" id="GO:0010976">
    <property type="term" value="P:positive regulation of neuron projection development"/>
    <property type="evidence" value="ECO:0000250"/>
    <property type="project" value="UniProtKB"/>
</dbReference>
<dbReference type="GO" id="GO:0010632">
    <property type="term" value="P:regulation of epithelial cell migration"/>
    <property type="evidence" value="ECO:0000250"/>
    <property type="project" value="UniProtKB"/>
</dbReference>
<dbReference type="CDD" id="cd16029">
    <property type="entry name" value="4-S"/>
    <property type="match status" value="1"/>
</dbReference>
<dbReference type="FunFam" id="3.40.720.10:FF:000007">
    <property type="entry name" value="Arylsulfatase family, member J"/>
    <property type="match status" value="1"/>
</dbReference>
<dbReference type="Gene3D" id="3.30.1120.10">
    <property type="match status" value="1"/>
</dbReference>
<dbReference type="Gene3D" id="3.40.720.10">
    <property type="entry name" value="Alkaline Phosphatase, subunit A"/>
    <property type="match status" value="1"/>
</dbReference>
<dbReference type="InterPro" id="IPR017850">
    <property type="entry name" value="Alkaline_phosphatase_core_sf"/>
</dbReference>
<dbReference type="InterPro" id="IPR047115">
    <property type="entry name" value="ARSB"/>
</dbReference>
<dbReference type="InterPro" id="IPR024607">
    <property type="entry name" value="Sulfatase_CS"/>
</dbReference>
<dbReference type="InterPro" id="IPR000917">
    <property type="entry name" value="Sulfatase_N"/>
</dbReference>
<dbReference type="PANTHER" id="PTHR10342">
    <property type="entry name" value="ARYLSULFATASE"/>
    <property type="match status" value="1"/>
</dbReference>
<dbReference type="PANTHER" id="PTHR10342:SF274">
    <property type="entry name" value="ARYLSULFATASE B"/>
    <property type="match status" value="1"/>
</dbReference>
<dbReference type="Pfam" id="PF00884">
    <property type="entry name" value="Sulfatase"/>
    <property type="match status" value="1"/>
</dbReference>
<dbReference type="SUPFAM" id="SSF53649">
    <property type="entry name" value="Alkaline phosphatase-like"/>
    <property type="match status" value="1"/>
</dbReference>
<dbReference type="PROSITE" id="PS00523">
    <property type="entry name" value="SULFATASE_1"/>
    <property type="match status" value="1"/>
</dbReference>
<dbReference type="PROSITE" id="PS00149">
    <property type="entry name" value="SULFATASE_2"/>
    <property type="match status" value="1"/>
</dbReference>
<accession>P50429</accession>
<accession>Q32KJ1</accession>
<accession>Q3TYV7</accession>
<accession>Q3U4Q6</accession>
<accession>Q8C404</accession>
<comment type="function">
    <text evidence="3 4">Removes sulfate groups from chondroitin-4-sulfate (C4S) and regulates its degradation (By similarity). Involved in the regulation of cell adhesion, cell migration and invasion in colonic epithelium (By similarity). In the central nervous system, is a regulator of neurite outgrowth and neuronal plasticity, acting through the control of sulfate glycosaminoglycans and neurocan levels (By similarity).</text>
</comment>
<comment type="catalytic activity">
    <reaction>
        <text>Hydrolysis of the 4-sulfate groups of the N-acetyl-D-galactosamine 4-sulfate units of chondroitin sulfate and dermatan sulfate.</text>
        <dbReference type="EC" id="3.1.6.12"/>
    </reaction>
</comment>
<comment type="cofactor">
    <cofactor evidence="1">
        <name>Ca(2+)</name>
        <dbReference type="ChEBI" id="CHEBI:29108"/>
    </cofactor>
    <text evidence="1">Binds 1 Ca(2+) ion per subunit.</text>
</comment>
<comment type="activity regulation">
    <text evidence="4">Inhibited by ethanol (By similarity).</text>
</comment>
<comment type="subunit">
    <text evidence="1">Homodimer.</text>
</comment>
<comment type="subcellular location">
    <subcellularLocation>
        <location evidence="6">Lysosome</location>
    </subcellularLocation>
    <subcellularLocation>
        <location evidence="6">Cell surface</location>
    </subcellularLocation>
</comment>
<comment type="alternative products">
    <event type="alternative splicing"/>
    <isoform>
        <id>P50429-1</id>
        <name>1</name>
        <sequence type="displayed"/>
    </isoform>
    <isoform>
        <id>P50429-2</id>
        <name>2</name>
        <sequence type="described" ref="VSP_007881 VSP_022249"/>
    </isoform>
</comment>
<comment type="PTM">
    <text evidence="1">The conversion to 3-oxoalanine (also known as C-formylglycine, FGly), of a serine or cysteine residue in prokaryotes and of a cysteine residue in eukaryotes, is critical for catalytic activity.</text>
</comment>
<comment type="similarity">
    <text evidence="8">Belongs to the sulfatase family.</text>
</comment>
<protein>
    <recommendedName>
        <fullName>Arylsulfatase B</fullName>
        <shortName>ASB</shortName>
        <ecNumber>3.1.6.12</ecNumber>
    </recommendedName>
    <alternativeName>
        <fullName>N-acetylgalactosamine-4-sulfatase</fullName>
        <shortName>G4S</shortName>
    </alternativeName>
</protein>
<name>ARSB_MOUSE</name>
<keyword id="KW-0025">Alternative splicing</keyword>
<keyword id="KW-0106">Calcium</keyword>
<keyword id="KW-1015">Disulfide bond</keyword>
<keyword id="KW-0325">Glycoprotein</keyword>
<keyword id="KW-0378">Hydrolase</keyword>
<keyword id="KW-0458">Lysosome</keyword>
<keyword id="KW-0479">Metal-binding</keyword>
<keyword id="KW-1185">Reference proteome</keyword>
<keyword id="KW-0732">Signal</keyword>
<gene>
    <name type="primary">Arsb</name>
    <name type="synonym">As1</name>
    <name type="synonym">As1-s</name>
</gene>
<proteinExistence type="evidence at protein level"/>
<feature type="signal peptide" evidence="5">
    <location>
        <begin position="1"/>
        <end position="41"/>
    </location>
</feature>
<feature type="chain" id="PRO_0000033423" description="Arylsulfatase B">
    <location>
        <begin position="42"/>
        <end position="534"/>
    </location>
</feature>
<feature type="active site" description="Nucleophile" evidence="2">
    <location>
        <position position="92"/>
    </location>
</feature>
<feature type="active site" evidence="2">
    <location>
        <position position="148"/>
    </location>
</feature>
<feature type="binding site" evidence="1">
    <location>
        <position position="54"/>
    </location>
    <ligand>
        <name>Ca(2+)</name>
        <dbReference type="ChEBI" id="CHEBI:29108"/>
    </ligand>
</feature>
<feature type="binding site" evidence="1">
    <location>
        <position position="55"/>
    </location>
    <ligand>
        <name>Ca(2+)</name>
        <dbReference type="ChEBI" id="CHEBI:29108"/>
    </ligand>
</feature>
<feature type="binding site" description="via 3-oxoalanine" evidence="1">
    <location>
        <position position="92"/>
    </location>
    <ligand>
        <name>Ca(2+)</name>
        <dbReference type="ChEBI" id="CHEBI:29108"/>
    </ligand>
</feature>
<feature type="binding site" evidence="1">
    <location>
        <position position="146"/>
    </location>
    <ligand>
        <name>substrate</name>
    </ligand>
</feature>
<feature type="binding site" evidence="1">
    <location>
        <position position="243"/>
    </location>
    <ligand>
        <name>substrate</name>
    </ligand>
</feature>
<feature type="binding site" evidence="1">
    <location>
        <position position="301"/>
    </location>
    <ligand>
        <name>Ca(2+)</name>
        <dbReference type="ChEBI" id="CHEBI:29108"/>
    </ligand>
</feature>
<feature type="binding site" evidence="1">
    <location>
        <position position="302"/>
    </location>
    <ligand>
        <name>Ca(2+)</name>
        <dbReference type="ChEBI" id="CHEBI:29108"/>
    </ligand>
</feature>
<feature type="binding site" evidence="1">
    <location>
        <position position="319"/>
    </location>
    <ligand>
        <name>substrate</name>
    </ligand>
</feature>
<feature type="modified residue" description="3-oxoalanine (Cys)" evidence="2">
    <location>
        <position position="92"/>
    </location>
</feature>
<feature type="glycosylation site" description="N-linked (GlcNAc...) asparagine" evidence="5">
    <location>
        <position position="189"/>
    </location>
</feature>
<feature type="glycosylation site" description="N-linked (GlcNAc...) asparagine" evidence="5">
    <location>
        <position position="280"/>
    </location>
</feature>
<feature type="glycosylation site" description="N-linked (GlcNAc...) asparagine" evidence="5">
    <location>
        <position position="292"/>
    </location>
</feature>
<feature type="glycosylation site" description="N-linked (GlcNAc...) asparagine" evidence="5">
    <location>
        <position position="367"/>
    </location>
</feature>
<feature type="glycosylation site" description="N-linked (GlcNAc...) asparagine" evidence="5">
    <location>
        <position position="427"/>
    </location>
</feature>
<feature type="glycosylation site" description="N-linked (GlcNAc...) asparagine" evidence="5">
    <location>
        <position position="459"/>
    </location>
</feature>
<feature type="disulfide bond" evidence="1">
    <location>
        <begin position="118"/>
        <end position="522"/>
    </location>
</feature>
<feature type="disulfide bond" evidence="1">
    <location>
        <begin position="122"/>
        <end position="156"/>
    </location>
</feature>
<feature type="disulfide bond" evidence="1">
    <location>
        <begin position="182"/>
        <end position="193"/>
    </location>
</feature>
<feature type="disulfide bond" evidence="1">
    <location>
        <begin position="406"/>
        <end position="448"/>
    </location>
</feature>
<feature type="splice variant" id="VSP_007881" description="In isoform 2." evidence="7">
    <original>EGHPSPRVELLHNIDQDFFDGLPCPGKNMTPAKDDSFPLEHSAFNTSIH</original>
    <variation>PVTGDHWHAEGELGCSFRTASAAEEEPTYKLREKKRRKSPDCGRARWFL</variation>
    <location>
        <begin position="383"/>
        <end position="431"/>
    </location>
</feature>
<feature type="splice variant" id="VSP_022249" description="In isoform 2." evidence="7">
    <location>
        <begin position="432"/>
        <end position="534"/>
    </location>
</feature>
<feature type="sequence conflict" description="In Ref. 3; AAA37261." evidence="8" ref="3">
    <original>D</original>
    <variation>A</variation>
    <location>
        <position position="60"/>
    </location>
</feature>
<feature type="sequence conflict" description="In Ref. 1; BAE34455 and 4; CAA63067." evidence="8" ref="1 4">
    <original>T</original>
    <variation>S</variation>
    <location>
        <position position="352"/>
    </location>
</feature>
<feature type="sequence conflict" description="In Ref. 2; CAI84992." evidence="8" ref="2">
    <original>G</original>
    <variation>D</variation>
    <location>
        <position position="467"/>
    </location>
</feature>
<organism>
    <name type="scientific">Mus musculus</name>
    <name type="common">Mouse</name>
    <dbReference type="NCBI Taxonomy" id="10090"/>
    <lineage>
        <taxon>Eukaryota</taxon>
        <taxon>Metazoa</taxon>
        <taxon>Chordata</taxon>
        <taxon>Craniata</taxon>
        <taxon>Vertebrata</taxon>
        <taxon>Euteleostomi</taxon>
        <taxon>Mammalia</taxon>
        <taxon>Eutheria</taxon>
        <taxon>Euarchontoglires</taxon>
        <taxon>Glires</taxon>
        <taxon>Rodentia</taxon>
        <taxon>Myomorpha</taxon>
        <taxon>Muroidea</taxon>
        <taxon>Muridae</taxon>
        <taxon>Murinae</taxon>
        <taxon>Mus</taxon>
        <taxon>Mus</taxon>
    </lineage>
</organism>
<sequence>MGKLSPCTGRSRPGGPGPQLPLLLLLLQLLLLLLSPARASGATQPPHVVFVLADDLGWNDLGFHGSVIRTPHLDALAAGGVVLDNYYVQPLCTPSRSQLLTGRYQIHLGLQHYLIMTCQPSCVPLDEKLLPQLLKEAGYATHMVGKWHLGMYRKECLPTRRGFDTYFGYLLGSEDYYTHEACAPIESLNGTRCALDLRDGEEPAKEYNNIYSTNIFTKRATTVIANHPPEKPLFLYLAFQSVHDPLQVPEEYMEPYGFIQDKHRRIYAGMVSLMDEAVGNVTKALKSHGLWNNTVFIFSTDNGGQTRSGGNNWPLRGRKGTLWEGGIRGTGFVASPLLKQKGVKSRELMHITDWLPTLVDLAGGSTNGTKPLDGFNMWKTISEGHPSPRVELLHNIDQDFFDGLPCPGKNMTPAKDDSFPLEHSAFNTSIHAGIRYKNWKLLTGHPGCGYWFPPPSQSNVSEIPPVGPPTKTLWLFDINQDPEERHDVSREHPHIVQNLLSRLQYYHEHSVPSHFPPLDPRCDPKSTGVWSPWM</sequence>
<reference key="1">
    <citation type="journal article" date="2005" name="Science">
        <title>The transcriptional landscape of the mammalian genome.</title>
        <authorList>
            <person name="Carninci P."/>
            <person name="Kasukawa T."/>
            <person name="Katayama S."/>
            <person name="Gough J."/>
            <person name="Frith M.C."/>
            <person name="Maeda N."/>
            <person name="Oyama R."/>
            <person name="Ravasi T."/>
            <person name="Lenhard B."/>
            <person name="Wells C."/>
            <person name="Kodzius R."/>
            <person name="Shimokawa K."/>
            <person name="Bajic V.B."/>
            <person name="Brenner S.E."/>
            <person name="Batalov S."/>
            <person name="Forrest A.R."/>
            <person name="Zavolan M."/>
            <person name="Davis M.J."/>
            <person name="Wilming L.G."/>
            <person name="Aidinis V."/>
            <person name="Allen J.E."/>
            <person name="Ambesi-Impiombato A."/>
            <person name="Apweiler R."/>
            <person name="Aturaliya R.N."/>
            <person name="Bailey T.L."/>
            <person name="Bansal M."/>
            <person name="Baxter L."/>
            <person name="Beisel K.W."/>
            <person name="Bersano T."/>
            <person name="Bono H."/>
            <person name="Chalk A.M."/>
            <person name="Chiu K.P."/>
            <person name="Choudhary V."/>
            <person name="Christoffels A."/>
            <person name="Clutterbuck D.R."/>
            <person name="Crowe M.L."/>
            <person name="Dalla E."/>
            <person name="Dalrymple B.P."/>
            <person name="de Bono B."/>
            <person name="Della Gatta G."/>
            <person name="di Bernardo D."/>
            <person name="Down T."/>
            <person name="Engstrom P."/>
            <person name="Fagiolini M."/>
            <person name="Faulkner G."/>
            <person name="Fletcher C.F."/>
            <person name="Fukushima T."/>
            <person name="Furuno M."/>
            <person name="Futaki S."/>
            <person name="Gariboldi M."/>
            <person name="Georgii-Hemming P."/>
            <person name="Gingeras T.R."/>
            <person name="Gojobori T."/>
            <person name="Green R.E."/>
            <person name="Gustincich S."/>
            <person name="Harbers M."/>
            <person name="Hayashi Y."/>
            <person name="Hensch T.K."/>
            <person name="Hirokawa N."/>
            <person name="Hill D."/>
            <person name="Huminiecki L."/>
            <person name="Iacono M."/>
            <person name="Ikeo K."/>
            <person name="Iwama A."/>
            <person name="Ishikawa T."/>
            <person name="Jakt M."/>
            <person name="Kanapin A."/>
            <person name="Katoh M."/>
            <person name="Kawasawa Y."/>
            <person name="Kelso J."/>
            <person name="Kitamura H."/>
            <person name="Kitano H."/>
            <person name="Kollias G."/>
            <person name="Krishnan S.P."/>
            <person name="Kruger A."/>
            <person name="Kummerfeld S.K."/>
            <person name="Kurochkin I.V."/>
            <person name="Lareau L.F."/>
            <person name="Lazarevic D."/>
            <person name="Lipovich L."/>
            <person name="Liu J."/>
            <person name="Liuni S."/>
            <person name="McWilliam S."/>
            <person name="Madan Babu M."/>
            <person name="Madera M."/>
            <person name="Marchionni L."/>
            <person name="Matsuda H."/>
            <person name="Matsuzawa S."/>
            <person name="Miki H."/>
            <person name="Mignone F."/>
            <person name="Miyake S."/>
            <person name="Morris K."/>
            <person name="Mottagui-Tabar S."/>
            <person name="Mulder N."/>
            <person name="Nakano N."/>
            <person name="Nakauchi H."/>
            <person name="Ng P."/>
            <person name="Nilsson R."/>
            <person name="Nishiguchi S."/>
            <person name="Nishikawa S."/>
            <person name="Nori F."/>
            <person name="Ohara O."/>
            <person name="Okazaki Y."/>
            <person name="Orlando V."/>
            <person name="Pang K.C."/>
            <person name="Pavan W.J."/>
            <person name="Pavesi G."/>
            <person name="Pesole G."/>
            <person name="Petrovsky N."/>
            <person name="Piazza S."/>
            <person name="Reed J."/>
            <person name="Reid J.F."/>
            <person name="Ring B.Z."/>
            <person name="Ringwald M."/>
            <person name="Rost B."/>
            <person name="Ruan Y."/>
            <person name="Salzberg S.L."/>
            <person name="Sandelin A."/>
            <person name="Schneider C."/>
            <person name="Schoenbach C."/>
            <person name="Sekiguchi K."/>
            <person name="Semple C.A."/>
            <person name="Seno S."/>
            <person name="Sessa L."/>
            <person name="Sheng Y."/>
            <person name="Shibata Y."/>
            <person name="Shimada H."/>
            <person name="Shimada K."/>
            <person name="Silva D."/>
            <person name="Sinclair B."/>
            <person name="Sperling S."/>
            <person name="Stupka E."/>
            <person name="Sugiura K."/>
            <person name="Sultana R."/>
            <person name="Takenaka Y."/>
            <person name="Taki K."/>
            <person name="Tammoja K."/>
            <person name="Tan S.L."/>
            <person name="Tang S."/>
            <person name="Taylor M.S."/>
            <person name="Tegner J."/>
            <person name="Teichmann S.A."/>
            <person name="Ueda H.R."/>
            <person name="van Nimwegen E."/>
            <person name="Verardo R."/>
            <person name="Wei C.L."/>
            <person name="Yagi K."/>
            <person name="Yamanishi H."/>
            <person name="Zabarovsky E."/>
            <person name="Zhu S."/>
            <person name="Zimmer A."/>
            <person name="Hide W."/>
            <person name="Bult C."/>
            <person name="Grimmond S.M."/>
            <person name="Teasdale R.D."/>
            <person name="Liu E.T."/>
            <person name="Brusic V."/>
            <person name="Quackenbush J."/>
            <person name="Wahlestedt C."/>
            <person name="Mattick J.S."/>
            <person name="Hume D.A."/>
            <person name="Kai C."/>
            <person name="Sasaki D."/>
            <person name="Tomaru Y."/>
            <person name="Fukuda S."/>
            <person name="Kanamori-Katayama M."/>
            <person name="Suzuki M."/>
            <person name="Aoki J."/>
            <person name="Arakawa T."/>
            <person name="Iida J."/>
            <person name="Imamura K."/>
            <person name="Itoh M."/>
            <person name="Kato T."/>
            <person name="Kawaji H."/>
            <person name="Kawagashira N."/>
            <person name="Kawashima T."/>
            <person name="Kojima M."/>
            <person name="Kondo S."/>
            <person name="Konno H."/>
            <person name="Nakano K."/>
            <person name="Ninomiya N."/>
            <person name="Nishio T."/>
            <person name="Okada M."/>
            <person name="Plessy C."/>
            <person name="Shibata K."/>
            <person name="Shiraki T."/>
            <person name="Suzuki S."/>
            <person name="Tagami M."/>
            <person name="Waki K."/>
            <person name="Watahiki A."/>
            <person name="Okamura-Oho Y."/>
            <person name="Suzuki H."/>
            <person name="Kawai J."/>
            <person name="Hayashizaki Y."/>
        </authorList>
    </citation>
    <scope>NUCLEOTIDE SEQUENCE [LARGE SCALE MRNA] (ISOFORMS 1 AND 2)</scope>
    <source>
        <strain>C57BL/6J</strain>
        <tissue>Inner ear</tissue>
        <tissue>Thymus</tissue>
    </source>
</reference>
<reference key="2">
    <citation type="journal article" date="2009" name="PLoS Biol.">
        <title>Lineage-specific biology revealed by a finished genome assembly of the mouse.</title>
        <authorList>
            <person name="Church D.M."/>
            <person name="Goodstadt L."/>
            <person name="Hillier L.W."/>
            <person name="Zody M.C."/>
            <person name="Goldstein S."/>
            <person name="She X."/>
            <person name="Bult C.J."/>
            <person name="Agarwala R."/>
            <person name="Cherry J.L."/>
            <person name="DiCuccio M."/>
            <person name="Hlavina W."/>
            <person name="Kapustin Y."/>
            <person name="Meric P."/>
            <person name="Maglott D."/>
            <person name="Birtle Z."/>
            <person name="Marques A.C."/>
            <person name="Graves T."/>
            <person name="Zhou S."/>
            <person name="Teague B."/>
            <person name="Potamousis K."/>
            <person name="Churas C."/>
            <person name="Place M."/>
            <person name="Herschleb J."/>
            <person name="Runnheim R."/>
            <person name="Forrest D."/>
            <person name="Amos-Landgraf J."/>
            <person name="Schwartz D.C."/>
            <person name="Cheng Z."/>
            <person name="Lindblad-Toh K."/>
            <person name="Eichler E.E."/>
            <person name="Ponting C.P."/>
        </authorList>
    </citation>
    <scope>NUCLEOTIDE SEQUENCE [LARGE SCALE GENOMIC DNA]</scope>
    <source>
        <strain>C57BL/6J</strain>
    </source>
</reference>
<reference key="3">
    <citation type="journal article" date="1992" name="Genomics">
        <title>The sulfatase gene family: cross-species PCR cloning using the MOPAC technique.</title>
        <authorList>
            <person name="Grompe M."/>
            <person name="Pieretti M."/>
            <person name="Caskey C.T."/>
            <person name="Ballabio A."/>
        </authorList>
    </citation>
    <scope>NUCLEOTIDE SEQUENCE [MRNA] OF 58-90 (ISOFORM 1)</scope>
</reference>
<reference key="4">
    <citation type="journal article" date="1996" name="Proc. Natl. Acad. Sci. U.S.A.">
        <title>Targeted disruption of the arylsulfatase B gene results in mice resembling the phenotype of mucopolysaccharidosis VI.</title>
        <authorList>
            <person name="Evers M."/>
            <person name="Saftig P."/>
            <person name="Schmidt P."/>
            <person name="Hafner A."/>
            <person name="McLoghlin D.B."/>
            <person name="Schmahl W."/>
            <person name="Hess B."/>
            <person name="von Figura K."/>
            <person name="Peters C."/>
        </authorList>
    </citation>
    <scope>NUCLEOTIDE SEQUENCE [MRNA] OF 137-388 (ISOFORM 1)</scope>
</reference>
<reference key="5">
    <citation type="journal article" date="2005" name="Hum. Mol. Genet.">
        <title>Sulfatases and sulfatase modifying factors: an exclusive and promiscuous relationship.</title>
        <authorList>
            <person name="Sardiello M."/>
            <person name="Annunziata I."/>
            <person name="Roma G."/>
            <person name="Ballabio A."/>
        </authorList>
    </citation>
    <scope>IDENTIFICATION</scope>
</reference>
<reference key="6">
    <citation type="journal article" date="2009" name="Med. Mol. Morphol.">
        <title>Cell-surface arylsulfatase A and B on sinusoidal endothelial cells, hepatocytes, and Kupffer cells in mammalian livers.</title>
        <authorList>
            <person name="Mitsunaga-Nakatsubo K."/>
            <person name="Kusunoki S."/>
            <person name="Kawakami H."/>
            <person name="Akasaka K."/>
            <person name="Akimoto Y."/>
        </authorList>
    </citation>
    <scope>SUBCELLULAR LOCATION</scope>
</reference>
<reference key="7">
    <citation type="journal article" date="2010" name="Cell">
        <title>A tissue-specific atlas of mouse protein phosphorylation and expression.</title>
        <authorList>
            <person name="Huttlin E.L."/>
            <person name="Jedrychowski M.P."/>
            <person name="Elias J.E."/>
            <person name="Goswami T."/>
            <person name="Rad R."/>
            <person name="Beausoleil S.A."/>
            <person name="Villen J."/>
            <person name="Haas W."/>
            <person name="Sowa M.E."/>
            <person name="Gygi S.P."/>
        </authorList>
    </citation>
    <scope>IDENTIFICATION BY MASS SPECTROMETRY [LARGE SCALE ANALYSIS]</scope>
    <source>
        <tissue>Brain</tissue>
        <tissue>Kidney</tissue>
        <tissue>Liver</tissue>
        <tissue>Pancreas</tissue>
        <tissue>Spleen</tissue>
        <tissue>Testis</tissue>
    </source>
</reference>